<protein>
    <recommendedName>
        <fullName evidence="1">UDP-N-acetylenolpyruvoylglucosamine reductase</fullName>
        <ecNumber evidence="1">1.3.1.98</ecNumber>
    </recommendedName>
    <alternativeName>
        <fullName evidence="1">UDP-N-acetylmuramate dehydrogenase</fullName>
    </alternativeName>
</protein>
<dbReference type="EC" id="1.3.1.98" evidence="1"/>
<dbReference type="EMBL" id="CP001037">
    <property type="protein sequence ID" value="ACC79226.1"/>
    <property type="molecule type" value="Genomic_DNA"/>
</dbReference>
<dbReference type="RefSeq" id="WP_012407252.1">
    <property type="nucleotide sequence ID" value="NC_010628.1"/>
</dbReference>
<dbReference type="SMR" id="B2J718"/>
<dbReference type="STRING" id="63737.Npun_F0447"/>
<dbReference type="EnsemblBacteria" id="ACC79226">
    <property type="protein sequence ID" value="ACC79226"/>
    <property type="gene ID" value="Npun_F0447"/>
</dbReference>
<dbReference type="KEGG" id="npu:Npun_F0447"/>
<dbReference type="eggNOG" id="COG0812">
    <property type="taxonomic scope" value="Bacteria"/>
</dbReference>
<dbReference type="HOGENOM" id="CLU_035304_1_1_3"/>
<dbReference type="OrthoDB" id="9804753at2"/>
<dbReference type="PhylomeDB" id="B2J718"/>
<dbReference type="UniPathway" id="UPA00219"/>
<dbReference type="Proteomes" id="UP000001191">
    <property type="component" value="Chromosome"/>
</dbReference>
<dbReference type="GO" id="GO:0005829">
    <property type="term" value="C:cytosol"/>
    <property type="evidence" value="ECO:0007669"/>
    <property type="project" value="TreeGrafter"/>
</dbReference>
<dbReference type="GO" id="GO:0071949">
    <property type="term" value="F:FAD binding"/>
    <property type="evidence" value="ECO:0007669"/>
    <property type="project" value="InterPro"/>
</dbReference>
<dbReference type="GO" id="GO:0008762">
    <property type="term" value="F:UDP-N-acetylmuramate dehydrogenase activity"/>
    <property type="evidence" value="ECO:0007669"/>
    <property type="project" value="UniProtKB-UniRule"/>
</dbReference>
<dbReference type="GO" id="GO:0051301">
    <property type="term" value="P:cell division"/>
    <property type="evidence" value="ECO:0007669"/>
    <property type="project" value="UniProtKB-KW"/>
</dbReference>
<dbReference type="GO" id="GO:0071555">
    <property type="term" value="P:cell wall organization"/>
    <property type="evidence" value="ECO:0007669"/>
    <property type="project" value="UniProtKB-KW"/>
</dbReference>
<dbReference type="GO" id="GO:0009252">
    <property type="term" value="P:peptidoglycan biosynthetic process"/>
    <property type="evidence" value="ECO:0007669"/>
    <property type="project" value="UniProtKB-UniRule"/>
</dbReference>
<dbReference type="GO" id="GO:0008360">
    <property type="term" value="P:regulation of cell shape"/>
    <property type="evidence" value="ECO:0007669"/>
    <property type="project" value="UniProtKB-KW"/>
</dbReference>
<dbReference type="Gene3D" id="3.30.465.10">
    <property type="match status" value="1"/>
</dbReference>
<dbReference type="Gene3D" id="3.90.78.10">
    <property type="entry name" value="UDP-N-acetylenolpyruvoylglucosamine reductase, C-terminal domain"/>
    <property type="match status" value="1"/>
</dbReference>
<dbReference type="Gene3D" id="3.30.43.10">
    <property type="entry name" value="Uridine Diphospho-n-acetylenolpyruvylglucosamine Reductase, domain 2"/>
    <property type="match status" value="1"/>
</dbReference>
<dbReference type="HAMAP" id="MF_00037">
    <property type="entry name" value="MurB"/>
    <property type="match status" value="1"/>
</dbReference>
<dbReference type="InterPro" id="IPR016166">
    <property type="entry name" value="FAD-bd_PCMH"/>
</dbReference>
<dbReference type="InterPro" id="IPR036318">
    <property type="entry name" value="FAD-bd_PCMH-like_sf"/>
</dbReference>
<dbReference type="InterPro" id="IPR016167">
    <property type="entry name" value="FAD-bd_PCMH_sub1"/>
</dbReference>
<dbReference type="InterPro" id="IPR016169">
    <property type="entry name" value="FAD-bd_PCMH_sub2"/>
</dbReference>
<dbReference type="InterPro" id="IPR003170">
    <property type="entry name" value="MurB"/>
</dbReference>
<dbReference type="InterPro" id="IPR011601">
    <property type="entry name" value="MurB_C"/>
</dbReference>
<dbReference type="InterPro" id="IPR036635">
    <property type="entry name" value="MurB_C_sf"/>
</dbReference>
<dbReference type="InterPro" id="IPR006094">
    <property type="entry name" value="Oxid_FAD_bind_N"/>
</dbReference>
<dbReference type="NCBIfam" id="TIGR00179">
    <property type="entry name" value="murB"/>
    <property type="match status" value="1"/>
</dbReference>
<dbReference type="NCBIfam" id="NF010480">
    <property type="entry name" value="PRK13905.1"/>
    <property type="match status" value="1"/>
</dbReference>
<dbReference type="PANTHER" id="PTHR21071">
    <property type="entry name" value="UDP-N-ACETYLENOLPYRUVOYLGLUCOSAMINE REDUCTASE"/>
    <property type="match status" value="1"/>
</dbReference>
<dbReference type="PANTHER" id="PTHR21071:SF4">
    <property type="entry name" value="UDP-N-ACETYLENOLPYRUVOYLGLUCOSAMINE REDUCTASE"/>
    <property type="match status" value="1"/>
</dbReference>
<dbReference type="Pfam" id="PF01565">
    <property type="entry name" value="FAD_binding_4"/>
    <property type="match status" value="1"/>
</dbReference>
<dbReference type="Pfam" id="PF02873">
    <property type="entry name" value="MurB_C"/>
    <property type="match status" value="1"/>
</dbReference>
<dbReference type="SUPFAM" id="SSF56176">
    <property type="entry name" value="FAD-binding/transporter-associated domain-like"/>
    <property type="match status" value="1"/>
</dbReference>
<dbReference type="SUPFAM" id="SSF56194">
    <property type="entry name" value="Uridine diphospho-N-Acetylenolpyruvylglucosamine reductase, MurB, C-terminal domain"/>
    <property type="match status" value="1"/>
</dbReference>
<dbReference type="PROSITE" id="PS51387">
    <property type="entry name" value="FAD_PCMH"/>
    <property type="match status" value="1"/>
</dbReference>
<evidence type="ECO:0000255" key="1">
    <source>
        <dbReference type="HAMAP-Rule" id="MF_00037"/>
    </source>
</evidence>
<comment type="function">
    <text evidence="1">Cell wall formation.</text>
</comment>
<comment type="catalytic activity">
    <reaction evidence="1">
        <text>UDP-N-acetyl-alpha-D-muramate + NADP(+) = UDP-N-acetyl-3-O-(1-carboxyvinyl)-alpha-D-glucosamine + NADPH + H(+)</text>
        <dbReference type="Rhea" id="RHEA:12248"/>
        <dbReference type="ChEBI" id="CHEBI:15378"/>
        <dbReference type="ChEBI" id="CHEBI:57783"/>
        <dbReference type="ChEBI" id="CHEBI:58349"/>
        <dbReference type="ChEBI" id="CHEBI:68483"/>
        <dbReference type="ChEBI" id="CHEBI:70757"/>
        <dbReference type="EC" id="1.3.1.98"/>
    </reaction>
</comment>
<comment type="cofactor">
    <cofactor evidence="1">
        <name>FAD</name>
        <dbReference type="ChEBI" id="CHEBI:57692"/>
    </cofactor>
</comment>
<comment type="pathway">
    <text evidence="1">Cell wall biogenesis; peptidoglycan biosynthesis.</text>
</comment>
<comment type="subcellular location">
    <subcellularLocation>
        <location evidence="1">Cytoplasm</location>
    </subcellularLocation>
</comment>
<comment type="similarity">
    <text evidence="1">Belongs to the MurB family.</text>
</comment>
<sequence>MTISQAAGNVCTVSALNTKKHQTTNSVDSEVIYLPNTDCTIKSQACLSAFTSYRVGGAADLYVAPRNLEALQASLKYAKEGDLKVTTLGAGSNLLVSDGGISGLVIATRHLRFSHFDPQTGQLTVAAGESIPSLAWAAAELGWQGLEWAVGIPGTAGGAVVMNAGAHNSCIADMLVSAEVLSPDGTLETLTPEQLGYSYRTSLLQGGDRIVTQATLQLAPGADPAKVVAITKEHKKHRLSTQPYNFPSCGSVFRNPKPYSAGWLIEQTGLKGYQIGGAQVALLHANFIVNRGGAKASDIFCLIRHIQHQVQERWSINLEPEVKMLGEFQGAC</sequence>
<organism>
    <name type="scientific">Nostoc punctiforme (strain ATCC 29133 / PCC 73102)</name>
    <dbReference type="NCBI Taxonomy" id="63737"/>
    <lineage>
        <taxon>Bacteria</taxon>
        <taxon>Bacillati</taxon>
        <taxon>Cyanobacteriota</taxon>
        <taxon>Cyanophyceae</taxon>
        <taxon>Nostocales</taxon>
        <taxon>Nostocaceae</taxon>
        <taxon>Nostoc</taxon>
    </lineage>
</organism>
<keyword id="KW-0131">Cell cycle</keyword>
<keyword id="KW-0132">Cell division</keyword>
<keyword id="KW-0133">Cell shape</keyword>
<keyword id="KW-0961">Cell wall biogenesis/degradation</keyword>
<keyword id="KW-0963">Cytoplasm</keyword>
<keyword id="KW-0274">FAD</keyword>
<keyword id="KW-0285">Flavoprotein</keyword>
<keyword id="KW-0521">NADP</keyword>
<keyword id="KW-0560">Oxidoreductase</keyword>
<keyword id="KW-0573">Peptidoglycan synthesis</keyword>
<keyword id="KW-1185">Reference proteome</keyword>
<proteinExistence type="inferred from homology"/>
<gene>
    <name evidence="1" type="primary">murB</name>
    <name type="ordered locus">Npun_F0447</name>
</gene>
<name>MURB_NOSP7</name>
<feature type="chain" id="PRO_1000191436" description="UDP-N-acetylenolpyruvoylglucosamine reductase">
    <location>
        <begin position="1"/>
        <end position="332"/>
    </location>
</feature>
<feature type="domain" description="FAD-binding PCMH-type" evidence="1">
    <location>
        <begin position="55"/>
        <end position="221"/>
    </location>
</feature>
<feature type="active site" evidence="1">
    <location>
        <position position="200"/>
    </location>
</feature>
<feature type="active site" description="Proton donor" evidence="1">
    <location>
        <position position="251"/>
    </location>
</feature>
<feature type="active site" evidence="1">
    <location>
        <position position="321"/>
    </location>
</feature>
<reference key="1">
    <citation type="journal article" date="2013" name="Plant Physiol.">
        <title>A Nostoc punctiforme Sugar Transporter Necessary to Establish a Cyanobacterium-Plant Symbiosis.</title>
        <authorList>
            <person name="Ekman M."/>
            <person name="Picossi S."/>
            <person name="Campbell E.L."/>
            <person name="Meeks J.C."/>
            <person name="Flores E."/>
        </authorList>
    </citation>
    <scope>NUCLEOTIDE SEQUENCE [LARGE SCALE GENOMIC DNA]</scope>
    <source>
        <strain>ATCC 29133 / PCC 73102</strain>
    </source>
</reference>
<accession>B2J718</accession>